<evidence type="ECO:0000250" key="1">
    <source>
        <dbReference type="UniProtKB" id="A0A7G5KET3"/>
    </source>
</evidence>
<evidence type="ECO:0000250" key="2">
    <source>
        <dbReference type="UniProtKB" id="P00558"/>
    </source>
</evidence>
<evidence type="ECO:0000250" key="3">
    <source>
        <dbReference type="UniProtKB" id="P00560"/>
    </source>
</evidence>
<evidence type="ECO:0000250" key="4">
    <source>
        <dbReference type="UniProtKB" id="Q7SIB7"/>
    </source>
</evidence>
<evidence type="ECO:0000305" key="5"/>
<accession>P29406</accession>
<keyword id="KW-0067">ATP-binding</keyword>
<keyword id="KW-0963">Cytoplasm</keyword>
<keyword id="KW-0324">Glycolysis</keyword>
<keyword id="KW-0418">Kinase</keyword>
<keyword id="KW-0460">Magnesium</keyword>
<keyword id="KW-0479">Metal-binding</keyword>
<keyword id="KW-0496">Mitochondrion</keyword>
<keyword id="KW-0547">Nucleotide-binding</keyword>
<keyword id="KW-0808">Transferase</keyword>
<dbReference type="EC" id="2.7.2.3" evidence="3"/>
<dbReference type="EMBL" id="D10156">
    <property type="protein sequence ID" value="BAA01020.1"/>
    <property type="molecule type" value="Genomic_DNA"/>
</dbReference>
<dbReference type="PIR" id="S44063">
    <property type="entry name" value="S44063"/>
</dbReference>
<dbReference type="SMR" id="P29406"/>
<dbReference type="UniPathway" id="UPA00109">
    <property type="reaction ID" value="UER00185"/>
</dbReference>
<dbReference type="GO" id="GO:0005829">
    <property type="term" value="C:cytosol"/>
    <property type="evidence" value="ECO:0007669"/>
    <property type="project" value="TreeGrafter"/>
</dbReference>
<dbReference type="GO" id="GO:0005739">
    <property type="term" value="C:mitochondrion"/>
    <property type="evidence" value="ECO:0007669"/>
    <property type="project" value="UniProtKB-SubCell"/>
</dbReference>
<dbReference type="GO" id="GO:0043531">
    <property type="term" value="F:ADP binding"/>
    <property type="evidence" value="ECO:0007669"/>
    <property type="project" value="TreeGrafter"/>
</dbReference>
<dbReference type="GO" id="GO:0005524">
    <property type="term" value="F:ATP binding"/>
    <property type="evidence" value="ECO:0007669"/>
    <property type="project" value="UniProtKB-KW"/>
</dbReference>
<dbReference type="GO" id="GO:0046872">
    <property type="term" value="F:metal ion binding"/>
    <property type="evidence" value="ECO:0007669"/>
    <property type="project" value="UniProtKB-KW"/>
</dbReference>
<dbReference type="GO" id="GO:0004618">
    <property type="term" value="F:phosphoglycerate kinase activity"/>
    <property type="evidence" value="ECO:0007669"/>
    <property type="project" value="UniProtKB-EC"/>
</dbReference>
<dbReference type="GO" id="GO:0006094">
    <property type="term" value="P:gluconeogenesis"/>
    <property type="evidence" value="ECO:0007669"/>
    <property type="project" value="TreeGrafter"/>
</dbReference>
<dbReference type="GO" id="GO:0006096">
    <property type="term" value="P:glycolytic process"/>
    <property type="evidence" value="ECO:0007669"/>
    <property type="project" value="UniProtKB-UniPathway"/>
</dbReference>
<dbReference type="CDD" id="cd00318">
    <property type="entry name" value="Phosphoglycerate_kinase"/>
    <property type="match status" value="1"/>
</dbReference>
<dbReference type="FunFam" id="3.40.50.1260:FF:000003">
    <property type="entry name" value="Phosphoglycerate kinase"/>
    <property type="match status" value="1"/>
</dbReference>
<dbReference type="FunFam" id="3.40.50.1260:FF:000019">
    <property type="entry name" value="Phosphoglycerate kinase 1"/>
    <property type="match status" value="1"/>
</dbReference>
<dbReference type="Gene3D" id="3.40.50.1260">
    <property type="entry name" value="Phosphoglycerate kinase, N-terminal domain"/>
    <property type="match status" value="3"/>
</dbReference>
<dbReference type="HAMAP" id="MF_00145">
    <property type="entry name" value="Phosphoglyc_kinase"/>
    <property type="match status" value="1"/>
</dbReference>
<dbReference type="InterPro" id="IPR001576">
    <property type="entry name" value="Phosphoglycerate_kinase"/>
</dbReference>
<dbReference type="InterPro" id="IPR015911">
    <property type="entry name" value="Phosphoglycerate_kinase_CS"/>
</dbReference>
<dbReference type="InterPro" id="IPR015824">
    <property type="entry name" value="Phosphoglycerate_kinase_N"/>
</dbReference>
<dbReference type="InterPro" id="IPR036043">
    <property type="entry name" value="Phosphoglycerate_kinase_sf"/>
</dbReference>
<dbReference type="PANTHER" id="PTHR11406">
    <property type="entry name" value="PHOSPHOGLYCERATE KINASE"/>
    <property type="match status" value="1"/>
</dbReference>
<dbReference type="PANTHER" id="PTHR11406:SF0">
    <property type="entry name" value="PHOSPHOGLYCERATE KINASE"/>
    <property type="match status" value="1"/>
</dbReference>
<dbReference type="Pfam" id="PF00162">
    <property type="entry name" value="PGK"/>
    <property type="match status" value="1"/>
</dbReference>
<dbReference type="PIRSF" id="PIRSF000724">
    <property type="entry name" value="Pgk"/>
    <property type="match status" value="1"/>
</dbReference>
<dbReference type="PRINTS" id="PR00477">
    <property type="entry name" value="PHGLYCKINASE"/>
</dbReference>
<dbReference type="SUPFAM" id="SSF53748">
    <property type="entry name" value="Phosphoglycerate kinase"/>
    <property type="match status" value="1"/>
</dbReference>
<dbReference type="PROSITE" id="PS00111">
    <property type="entry name" value="PGLYCERATE_KINASE"/>
    <property type="match status" value="1"/>
</dbReference>
<proteinExistence type="inferred from homology"/>
<name>PGK2_RHINI</name>
<feature type="chain" id="PRO_0000145888" description="Phosphoglycerate kinase 2">
    <location>
        <begin position="1"/>
        <end position="417"/>
    </location>
</feature>
<feature type="binding site" evidence="2">
    <location>
        <position position="23"/>
    </location>
    <ligand>
        <name>(2R)-3-phosphoglycerate</name>
        <dbReference type="ChEBI" id="CHEBI:58272"/>
    </ligand>
</feature>
<feature type="binding site" evidence="4">
    <location>
        <position position="24"/>
    </location>
    <ligand>
        <name>(2R)-3-phosphoglycerate</name>
        <dbReference type="ChEBI" id="CHEBI:58272"/>
    </ligand>
</feature>
<feature type="binding site" evidence="2">
    <location>
        <position position="25"/>
    </location>
    <ligand>
        <name>(2R)-3-phosphoglycerate</name>
        <dbReference type="ChEBI" id="CHEBI:58272"/>
    </ligand>
</feature>
<feature type="binding site" evidence="4">
    <location>
        <position position="26"/>
    </location>
    <ligand>
        <name>(2R)-3-phosphoglycerate</name>
        <dbReference type="ChEBI" id="CHEBI:58272"/>
    </ligand>
</feature>
<feature type="binding site" evidence="2">
    <location>
        <position position="38"/>
    </location>
    <ligand>
        <name>(2R)-3-phosphoglycerate</name>
        <dbReference type="ChEBI" id="CHEBI:58272"/>
    </ligand>
</feature>
<feature type="binding site" evidence="4">
    <location>
        <position position="39"/>
    </location>
    <ligand>
        <name>(2R)-3-phosphoglycerate</name>
        <dbReference type="ChEBI" id="CHEBI:58272"/>
    </ligand>
</feature>
<feature type="binding site" evidence="2">
    <location>
        <position position="62"/>
    </location>
    <ligand>
        <name>(2R)-3-phosphoglycerate</name>
        <dbReference type="ChEBI" id="CHEBI:58272"/>
    </ligand>
</feature>
<feature type="binding site" evidence="4">
    <location>
        <position position="63"/>
    </location>
    <ligand>
        <name>(2R)-3-phosphoglycerate</name>
        <dbReference type="ChEBI" id="CHEBI:58272"/>
    </ligand>
</feature>
<feature type="binding site" evidence="2">
    <location>
        <position position="65"/>
    </location>
    <ligand>
        <name>(2R)-3-phosphoglycerate</name>
        <dbReference type="ChEBI" id="CHEBI:58272"/>
    </ligand>
</feature>
<feature type="binding site" evidence="4">
    <location>
        <position position="66"/>
    </location>
    <ligand>
        <name>(2R)-3-phosphoglycerate</name>
        <dbReference type="ChEBI" id="CHEBI:58272"/>
    </ligand>
</feature>
<feature type="binding site" evidence="2">
    <location>
        <position position="121"/>
    </location>
    <ligand>
        <name>(2R)-3-phosphoglycerate</name>
        <dbReference type="ChEBI" id="CHEBI:58272"/>
    </ligand>
</feature>
<feature type="binding site" evidence="4">
    <location>
        <position position="122"/>
    </location>
    <ligand>
        <name>(2R)-3-phosphoglycerate</name>
        <dbReference type="ChEBI" id="CHEBI:58272"/>
    </ligand>
</feature>
<feature type="binding site" evidence="2">
    <location>
        <position position="168"/>
    </location>
    <ligand>
        <name>(2R)-3-phosphoglycerate</name>
        <dbReference type="ChEBI" id="CHEBI:58272"/>
    </ligand>
</feature>
<feature type="binding site" evidence="4">
    <location>
        <position position="169"/>
    </location>
    <ligand>
        <name>(2R)-3-phosphoglycerate</name>
        <dbReference type="ChEBI" id="CHEBI:58272"/>
    </ligand>
</feature>
<feature type="binding site" evidence="2">
    <location>
        <position position="212"/>
    </location>
    <ligand>
        <name>ADP</name>
        <dbReference type="ChEBI" id="CHEBI:456216"/>
    </ligand>
</feature>
<feature type="binding site" evidence="2">
    <location>
        <position position="212"/>
    </location>
    <ligand>
        <name>CDP</name>
        <dbReference type="ChEBI" id="CHEBI:58069"/>
    </ligand>
</feature>
<feature type="binding site" evidence="4">
    <location>
        <position position="213"/>
    </location>
    <ligand>
        <name>AMP</name>
        <dbReference type="ChEBI" id="CHEBI:456215"/>
    </ligand>
</feature>
<feature type="binding site" evidence="4">
    <location>
        <position position="213"/>
    </location>
    <ligand>
        <name>ATP</name>
        <dbReference type="ChEBI" id="CHEBI:30616"/>
    </ligand>
</feature>
<feature type="binding site" evidence="2">
    <location>
        <position position="213"/>
    </location>
    <ligand>
        <name>Mg(2+)</name>
        <dbReference type="ChEBI" id="CHEBI:18420"/>
    </ligand>
</feature>
<feature type="binding site" evidence="4">
    <location>
        <position position="214"/>
    </location>
    <ligand>
        <name>AMP</name>
        <dbReference type="ChEBI" id="CHEBI:456215"/>
    </ligand>
</feature>
<feature type="binding site" evidence="2">
    <location>
        <position position="217"/>
    </location>
    <ligand>
        <name>CDP</name>
        <dbReference type="ChEBI" id="CHEBI:58069"/>
    </ligand>
</feature>
<feature type="binding site" evidence="2">
    <location>
        <position position="217"/>
    </location>
    <ligand>
        <name>Mg(2+)</name>
        <dbReference type="ChEBI" id="CHEBI:18420"/>
    </ligand>
</feature>
<feature type="binding site" evidence="4">
    <location>
        <position position="218"/>
    </location>
    <ligand>
        <name>AMP</name>
        <dbReference type="ChEBI" id="CHEBI:456215"/>
    </ligand>
</feature>
<feature type="binding site" evidence="4">
    <location>
        <position position="218"/>
    </location>
    <ligand>
        <name>ATP</name>
        <dbReference type="ChEBI" id="CHEBI:30616"/>
    </ligand>
</feature>
<feature type="binding site" evidence="2">
    <location>
        <position position="236"/>
    </location>
    <ligand>
        <name>ADP</name>
        <dbReference type="ChEBI" id="CHEBI:456216"/>
    </ligand>
</feature>
<feature type="binding site" evidence="2">
    <location>
        <position position="236"/>
    </location>
    <ligand>
        <name>CDP</name>
        <dbReference type="ChEBI" id="CHEBI:58069"/>
    </ligand>
</feature>
<feature type="binding site" evidence="4">
    <location>
        <position position="237"/>
    </location>
    <ligand>
        <name>AMP</name>
        <dbReference type="ChEBI" id="CHEBI:456215"/>
    </ligand>
</feature>
<feature type="binding site" evidence="4">
    <location>
        <position position="237"/>
    </location>
    <ligand>
        <name>ATP</name>
        <dbReference type="ChEBI" id="CHEBI:30616"/>
    </ligand>
</feature>
<feature type="binding site" evidence="4">
    <location>
        <position position="312"/>
    </location>
    <ligand>
        <name>AMP</name>
        <dbReference type="ChEBI" id="CHEBI:456215"/>
    </ligand>
</feature>
<feature type="binding site" evidence="4">
    <location>
        <position position="312"/>
    </location>
    <ligand>
        <name>ATP</name>
        <dbReference type="ChEBI" id="CHEBI:30616"/>
    </ligand>
</feature>
<feature type="binding site" evidence="2">
    <location>
        <position position="337"/>
    </location>
    <ligand>
        <name>CDP</name>
        <dbReference type="ChEBI" id="CHEBI:58069"/>
    </ligand>
</feature>
<feature type="binding site" evidence="2">
    <location>
        <position position="342"/>
    </location>
    <ligand>
        <name>ADP</name>
        <dbReference type="ChEBI" id="CHEBI:456216"/>
    </ligand>
</feature>
<feature type="binding site" evidence="2">
    <location>
        <position position="342"/>
    </location>
    <ligand>
        <name>CDP</name>
        <dbReference type="ChEBI" id="CHEBI:58069"/>
    </ligand>
</feature>
<feature type="binding site" evidence="4">
    <location>
        <position position="343"/>
    </location>
    <ligand>
        <name>AMP</name>
        <dbReference type="ChEBI" id="CHEBI:456215"/>
    </ligand>
</feature>
<feature type="binding site" evidence="4">
    <location>
        <position position="343"/>
    </location>
    <ligand>
        <name>ATP</name>
        <dbReference type="ChEBI" id="CHEBI:30616"/>
    </ligand>
</feature>
<feature type="binding site" evidence="4">
    <location>
        <position position="374"/>
    </location>
    <ligand>
        <name>ATP</name>
        <dbReference type="ChEBI" id="CHEBI:30616"/>
    </ligand>
</feature>
<feature type="binding site" evidence="4">
    <location>
        <position position="374"/>
    </location>
    <ligand>
        <name>Mg(2+)</name>
        <dbReference type="ChEBI" id="CHEBI:18420"/>
    </ligand>
</feature>
<feature type="binding site" evidence="4">
    <location>
        <position position="375"/>
    </location>
    <ligand>
        <name>ATP</name>
        <dbReference type="ChEBI" id="CHEBI:30616"/>
    </ligand>
</feature>
<organism>
    <name type="scientific">Rhizopus niveus</name>
    <dbReference type="NCBI Taxonomy" id="4844"/>
    <lineage>
        <taxon>Eukaryota</taxon>
        <taxon>Fungi</taxon>
        <taxon>Fungi incertae sedis</taxon>
        <taxon>Mucoromycota</taxon>
        <taxon>Mucoromycotina</taxon>
        <taxon>Mucoromycetes</taxon>
        <taxon>Mucorales</taxon>
        <taxon>Mucorineae</taxon>
        <taxon>Rhizopodaceae</taxon>
        <taxon>Rhizopus</taxon>
    </lineage>
</organism>
<gene>
    <name type="primary">PGK2</name>
</gene>
<sequence>MSLSNKLSIRDLDLKNKRVLIRVDFNVPMKDGAITNNNRIVQALPTVKYALDNGASAVILMSHLGRPNGEAVAKYSLKPVAAEVEKLLGKPVEFLNDCVGPDVEKACQSATGGKVILLENLRFHIEEEGSAKVRWSKVKADAEAVKKFRASLTALADIYVNDAFGTAHRAHSSMVGVDLSQRAAGFLMQKELEYFAKALENPARPFLAILGGAKVSDKIQLIENMLDKVNALIVCGGMAFTFKKTLDNVKQIGKSLFDEAGSKLVRNLVKKAAEKNVKLVFPVDFVTADKFAPDANTGYATDADGIPDEWEGLDCGKKSSELFREEILKSKTIVWNGPSGVFEFDAFANGTKSVLNAVIEATKEGATTIIGGGDTATAALKWGAEGKVSHISTGGGASLELLEGKELPGVTALSSKN</sequence>
<comment type="function">
    <text evidence="1 2 3">Catalyzes one of the two ATP producing reactions in the glycolytic pathway via the reversible conversion of 1,3-diphosphoglycerate to 3-phosphoglycerate (By similarity). Both L- and D- forms of purine and pyrimidine nucleotides can be used as substrates, but the activity is much lower on pyrimidines (By similarity). Negatively regulates the biosynthesis of acetyl-CoA from pyruvate in the mitochondrion (By similarity).</text>
</comment>
<comment type="catalytic activity">
    <reaction evidence="3">
        <text>(2R)-3-phosphoglycerate + ATP = (2R)-3-phospho-glyceroyl phosphate + ADP</text>
        <dbReference type="Rhea" id="RHEA:14801"/>
        <dbReference type="ChEBI" id="CHEBI:30616"/>
        <dbReference type="ChEBI" id="CHEBI:57604"/>
        <dbReference type="ChEBI" id="CHEBI:58272"/>
        <dbReference type="ChEBI" id="CHEBI:456216"/>
        <dbReference type="EC" id="2.7.2.3"/>
    </reaction>
</comment>
<comment type="cofactor">
    <cofactor evidence="2">
        <name>Mg(2+)</name>
        <dbReference type="ChEBI" id="CHEBI:18420"/>
    </cofactor>
</comment>
<comment type="pathway">
    <text evidence="3">Carbohydrate degradation; glycolysis; pyruvate from D-glyceraldehyde 3-phosphate: step 2/5.</text>
</comment>
<comment type="subunit">
    <text>Monomer.</text>
</comment>
<comment type="subcellular location">
    <subcellularLocation>
        <location evidence="3">Cytoplasm</location>
    </subcellularLocation>
    <subcellularLocation>
        <location evidence="3">Mitochondrion</location>
    </subcellularLocation>
</comment>
<comment type="similarity">
    <text evidence="5">Belongs to the phosphoglycerate kinase family.</text>
</comment>
<reference key="1">
    <citation type="journal article" date="1994" name="Curr. Genet.">
        <title>Cloning and characterization of two 3-phosphoglycerate kinase genes of Rhizopus niveus and heterologous gene expression using their promoters.</title>
        <authorList>
            <person name="Yanai K."/>
            <person name="Tanaka N."/>
            <person name="Horiuchi H."/>
            <person name="Ohta A."/>
            <person name="Takagi M."/>
        </authorList>
    </citation>
    <scope>NUCLEOTIDE SEQUENCE [GENOMIC DNA]</scope>
    <source>
        <strain>NBRC 4810 / AS 3.4817</strain>
    </source>
</reference>
<protein>
    <recommendedName>
        <fullName>Phosphoglycerate kinase 2</fullName>
        <ecNumber evidence="3">2.7.2.3</ecNumber>
    </recommendedName>
</protein>